<organism>
    <name type="scientific">Campylobacter jejuni subsp. jejuni serotype O:2 (strain ATCC 700819 / NCTC 11168)</name>
    <dbReference type="NCBI Taxonomy" id="192222"/>
    <lineage>
        <taxon>Bacteria</taxon>
        <taxon>Pseudomonadati</taxon>
        <taxon>Campylobacterota</taxon>
        <taxon>Epsilonproteobacteria</taxon>
        <taxon>Campylobacterales</taxon>
        <taxon>Campylobacteraceae</taxon>
        <taxon>Campylobacter</taxon>
    </lineage>
</organism>
<evidence type="ECO:0000255" key="1">
    <source>
        <dbReference type="HAMAP-Rule" id="MF_02122"/>
    </source>
</evidence>
<evidence type="ECO:0007829" key="2">
    <source>
        <dbReference type="PDB" id="2RIJ"/>
    </source>
</evidence>
<feature type="chain" id="PRO_0000412257" description="2,3,4,5-tetrahydropyridine-2,6-dicarboxylate N-succinyltransferase">
    <location>
        <begin position="1"/>
        <end position="386"/>
    </location>
</feature>
<feature type="active site" description="Acyl-anhydride intermediate" evidence="1">
    <location>
        <position position="257"/>
    </location>
</feature>
<feature type="binding site" evidence="1">
    <location>
        <position position="259"/>
    </location>
    <ligand>
        <name>succinyl-CoA</name>
        <dbReference type="ChEBI" id="CHEBI:57292"/>
    </ligand>
</feature>
<feature type="binding site" evidence="1">
    <location>
        <position position="274"/>
    </location>
    <ligand>
        <name>succinyl-CoA</name>
        <dbReference type="ChEBI" id="CHEBI:57292"/>
    </ligand>
</feature>
<feature type="binding site" evidence="1">
    <location>
        <position position="277"/>
    </location>
    <ligand>
        <name>succinyl-CoA</name>
        <dbReference type="ChEBI" id="CHEBI:57292"/>
    </ligand>
</feature>
<feature type="binding site" evidence="1">
    <location>
        <position position="300"/>
    </location>
    <ligand>
        <name>succinyl-CoA</name>
        <dbReference type="ChEBI" id="CHEBI:57292"/>
    </ligand>
</feature>
<feature type="binding site" evidence="1">
    <location>
        <begin position="315"/>
        <end position="316"/>
    </location>
    <ligand>
        <name>succinyl-CoA</name>
        <dbReference type="ChEBI" id="CHEBI:57292"/>
    </ligand>
</feature>
<feature type="binding site" evidence="1">
    <location>
        <position position="323"/>
    </location>
    <ligand>
        <name>succinyl-CoA</name>
        <dbReference type="ChEBI" id="CHEBI:57292"/>
    </ligand>
</feature>
<feature type="binding site" evidence="1">
    <location>
        <position position="349"/>
    </location>
    <ligand>
        <name>succinyl-CoA</name>
        <dbReference type="ChEBI" id="CHEBI:57292"/>
    </ligand>
</feature>
<feature type="binding site" evidence="1">
    <location>
        <begin position="362"/>
        <end position="365"/>
    </location>
    <ligand>
        <name>succinyl-CoA</name>
        <dbReference type="ChEBI" id="CHEBI:57292"/>
    </ligand>
</feature>
<feature type="helix" evidence="2">
    <location>
        <begin position="5"/>
        <end position="16"/>
    </location>
</feature>
<feature type="strand" evidence="2">
    <location>
        <begin position="25"/>
        <end position="34"/>
    </location>
</feature>
<feature type="strand" evidence="2">
    <location>
        <begin position="42"/>
        <end position="48"/>
    </location>
</feature>
<feature type="strand" evidence="2">
    <location>
        <begin position="51"/>
        <end position="53"/>
    </location>
</feature>
<feature type="helix" evidence="2">
    <location>
        <begin position="56"/>
        <end position="68"/>
    </location>
</feature>
<feature type="strand" evidence="2">
    <location>
        <begin position="77"/>
        <end position="83"/>
    </location>
</feature>
<feature type="helix" evidence="2">
    <location>
        <begin position="86"/>
        <end position="95"/>
    </location>
</feature>
<feature type="helix" evidence="2">
    <location>
        <begin position="97"/>
        <end position="99"/>
    </location>
</feature>
<feature type="helix" evidence="2">
    <location>
        <begin position="106"/>
        <end position="116"/>
    </location>
</feature>
<feature type="strand" evidence="2">
    <location>
        <begin position="122"/>
        <end position="130"/>
    </location>
</feature>
<feature type="helix" evidence="2">
    <location>
        <begin position="137"/>
        <end position="148"/>
    </location>
</feature>
<feature type="helix" evidence="2">
    <location>
        <begin position="162"/>
        <end position="165"/>
    </location>
</feature>
<feature type="strand" evidence="2">
    <location>
        <begin position="169"/>
        <end position="172"/>
    </location>
</feature>
<feature type="strand" evidence="2">
    <location>
        <begin position="175"/>
        <end position="177"/>
    </location>
</feature>
<feature type="helix" evidence="2">
    <location>
        <begin position="179"/>
        <end position="191"/>
    </location>
</feature>
<feature type="strand" evidence="2">
    <location>
        <begin position="200"/>
        <end position="204"/>
    </location>
</feature>
<feature type="helix" evidence="2">
    <location>
        <begin position="207"/>
        <end position="209"/>
    </location>
</feature>
<feature type="strand" evidence="2">
    <location>
        <begin position="218"/>
        <end position="220"/>
    </location>
</feature>
<feature type="helix" evidence="2">
    <location>
        <begin position="222"/>
        <end position="224"/>
    </location>
</feature>
<feature type="strand" evidence="2">
    <location>
        <begin position="239"/>
        <end position="241"/>
    </location>
</feature>
<feature type="strand" evidence="2">
    <location>
        <begin position="249"/>
        <end position="252"/>
    </location>
</feature>
<feature type="strand" evidence="2">
    <location>
        <begin position="258"/>
        <end position="260"/>
    </location>
</feature>
<feature type="strand" evidence="2">
    <location>
        <begin position="325"/>
        <end position="328"/>
    </location>
</feature>
<feature type="helix" evidence="2">
    <location>
        <begin position="331"/>
        <end position="337"/>
    </location>
</feature>
<feature type="strand" evidence="2">
    <location>
        <begin position="345"/>
        <end position="349"/>
    </location>
</feature>
<feature type="helix" evidence="2">
    <location>
        <begin position="350"/>
        <end position="353"/>
    </location>
</feature>
<feature type="strand" evidence="2">
    <location>
        <begin position="357"/>
        <end position="363"/>
    </location>
</feature>
<feature type="turn" evidence="2">
    <location>
        <begin position="365"/>
        <end position="367"/>
    </location>
</feature>
<feature type="strand" evidence="2">
    <location>
        <begin position="370"/>
        <end position="374"/>
    </location>
</feature>
<feature type="helix" evidence="2">
    <location>
        <begin position="376"/>
        <end position="379"/>
    </location>
</feature>
<proteinExistence type="evidence at protein level"/>
<protein>
    <recommendedName>
        <fullName evidence="1">2,3,4,5-tetrahydropyridine-2,6-dicarboxylate N-succinyltransferase</fullName>
        <ecNumber evidence="1">2.3.1.117</ecNumber>
    </recommendedName>
    <alternativeName>
        <fullName evidence="1">Tetrahydrodipicolinate N-succinyltransferase</fullName>
        <shortName evidence="1">THDP succinyltransferase</shortName>
        <shortName evidence="1">THP succinyltransferase</shortName>
    </alternativeName>
    <alternativeName>
        <fullName evidence="1">Tetrahydropicolinate succinylase</fullName>
    </alternativeName>
</protein>
<sequence>MINTKEDFLLLIKQIEQKSGYKKPKAFGIARLDRGQLNKNKILQASFALINYEQNFGSAAIMLEAFMQRGVEIDFNASEFVQTLKLEDIDFALSCFKPFLEEDGHQNIDLLKIIKDKFKDDEFSFVCLFEDKEPLSVESIYLKLYLLSTKKVPLRSINLNGAFGLLSNVAWSDDKPIELEYLRANEMRLKMSNQYPKIDFVDKFPRFLAHIIPEDNTRILESSKVRMGASLAAGTTIMPGASYVNFNAGTTGACMVEGRISSSAIVGEGSDVGGGASILGVLSGTSGNAISVGKACLLGANSVTGIPLGDNCIVDAGIAVLEGTKFLLKDAEELAKLNPYFNFDKEIYKGLELKGLNGLHFRQDSISGAMIVALNKKAVKLNEALH</sequence>
<comment type="function">
    <text evidence="1">Catalyzes the conversion of the cyclic tetrahydrodipicolinate (THDP) into the acyclic N-succinyl-L-2-amino-6-oxopimelate using succinyl-CoA.</text>
</comment>
<comment type="catalytic activity">
    <reaction evidence="1">
        <text>(S)-2,3,4,5-tetrahydrodipicolinate + succinyl-CoA + H2O = (S)-2-succinylamino-6-oxoheptanedioate + CoA</text>
        <dbReference type="Rhea" id="RHEA:17325"/>
        <dbReference type="ChEBI" id="CHEBI:15377"/>
        <dbReference type="ChEBI" id="CHEBI:15685"/>
        <dbReference type="ChEBI" id="CHEBI:16845"/>
        <dbReference type="ChEBI" id="CHEBI:57287"/>
        <dbReference type="ChEBI" id="CHEBI:57292"/>
        <dbReference type="EC" id="2.3.1.117"/>
    </reaction>
</comment>
<comment type="pathway">
    <text evidence="1">Amino-acid biosynthesis; L-lysine biosynthesis via DAP pathway; LL-2,6-diaminopimelate from (S)-tetrahydrodipicolinate (succinylase route): step 1/3.</text>
</comment>
<comment type="subunit">
    <text evidence="1">Homotrimer.</text>
</comment>
<comment type="subcellular location">
    <subcellularLocation>
        <location evidence="1">Cytoplasm</location>
    </subcellularLocation>
</comment>
<comment type="similarity">
    <text evidence="1">Belongs to the type 2 tetrahydrodipicolinate N-succinyltransferase family.</text>
</comment>
<gene>
    <name evidence="1" type="primary">dapD</name>
    <name type="ordered locus">Cj1605c</name>
</gene>
<name>DAPD_CAMJE</name>
<accession>Q0P823</accession>
<dbReference type="EC" id="2.3.1.117" evidence="1"/>
<dbReference type="EMBL" id="AL111168">
    <property type="protein sequence ID" value="CAL35702.1"/>
    <property type="molecule type" value="Genomic_DNA"/>
</dbReference>
<dbReference type="PIR" id="C81256">
    <property type="entry name" value="C81256"/>
</dbReference>
<dbReference type="RefSeq" id="WP_002851311.1">
    <property type="nucleotide sequence ID" value="NZ_SZUC01000002.1"/>
</dbReference>
<dbReference type="RefSeq" id="YP_002344974.1">
    <property type="nucleotide sequence ID" value="NC_002163.1"/>
</dbReference>
<dbReference type="PDB" id="2RIJ">
    <property type="method" value="X-ray"/>
    <property type="resolution" value="1.90 A"/>
    <property type="chains" value="A=1-386"/>
</dbReference>
<dbReference type="PDBsum" id="2RIJ"/>
<dbReference type="SMR" id="Q0P823"/>
<dbReference type="IntAct" id="Q0P823">
    <property type="interactions" value="3"/>
</dbReference>
<dbReference type="STRING" id="192222.Cj1605c"/>
<dbReference type="PaxDb" id="192222-Cj1605c"/>
<dbReference type="EnsemblBacteria" id="CAL35702">
    <property type="protein sequence ID" value="CAL35702"/>
    <property type="gene ID" value="Cj1605c"/>
</dbReference>
<dbReference type="GeneID" id="905872"/>
<dbReference type="KEGG" id="cje:Cj1605c"/>
<dbReference type="PATRIC" id="fig|192222.6.peg.1581"/>
<dbReference type="eggNOG" id="COG2171">
    <property type="taxonomic scope" value="Bacteria"/>
</dbReference>
<dbReference type="HOGENOM" id="CLU_057490_1_0_7"/>
<dbReference type="OrthoDB" id="9782799at2"/>
<dbReference type="UniPathway" id="UPA00034">
    <property type="reaction ID" value="UER00019"/>
</dbReference>
<dbReference type="EvolutionaryTrace" id="Q0P823"/>
<dbReference type="Proteomes" id="UP000000799">
    <property type="component" value="Chromosome"/>
</dbReference>
<dbReference type="GO" id="GO:0005737">
    <property type="term" value="C:cytoplasm"/>
    <property type="evidence" value="ECO:0007669"/>
    <property type="project" value="UniProtKB-SubCell"/>
</dbReference>
<dbReference type="GO" id="GO:0008666">
    <property type="term" value="F:2,3,4,5-tetrahydropyridine-2,6-dicarboxylate N-succinyltransferase activity"/>
    <property type="evidence" value="ECO:0007669"/>
    <property type="project" value="UniProtKB-EC"/>
</dbReference>
<dbReference type="GO" id="GO:0019877">
    <property type="term" value="P:diaminopimelate biosynthetic process"/>
    <property type="evidence" value="ECO:0007669"/>
    <property type="project" value="UniProtKB-KW"/>
</dbReference>
<dbReference type="GO" id="GO:0009089">
    <property type="term" value="P:lysine biosynthetic process via diaminopimelate"/>
    <property type="evidence" value="ECO:0007669"/>
    <property type="project" value="UniProtKB-UniPathway"/>
</dbReference>
<dbReference type="CDD" id="cd04649">
    <property type="entry name" value="LbH_THP_succinylT_putative"/>
    <property type="match status" value="1"/>
</dbReference>
<dbReference type="Gene3D" id="3.30.70.2010">
    <property type="match status" value="1"/>
</dbReference>
<dbReference type="Gene3D" id="2.160.10.10">
    <property type="entry name" value="Hexapeptide repeat proteins"/>
    <property type="match status" value="1"/>
</dbReference>
<dbReference type="Gene3D" id="3.30.60.70">
    <property type="entry name" value="Trimeric LpxA-like enzymes"/>
    <property type="match status" value="1"/>
</dbReference>
<dbReference type="HAMAP" id="MF_02122">
    <property type="entry name" value="DapD_type2"/>
    <property type="match status" value="1"/>
</dbReference>
<dbReference type="InterPro" id="IPR001451">
    <property type="entry name" value="Hexapep"/>
</dbReference>
<dbReference type="InterPro" id="IPR032784">
    <property type="entry name" value="THDPS_M"/>
</dbReference>
<dbReference type="InterPro" id="IPR038361">
    <property type="entry name" value="THDPS_M_sf"/>
</dbReference>
<dbReference type="InterPro" id="IPR011004">
    <property type="entry name" value="Trimer_LpxA-like_sf"/>
</dbReference>
<dbReference type="InterPro" id="IPR026586">
    <property type="entry name" value="Type2_DapD"/>
</dbReference>
<dbReference type="Pfam" id="PF14602">
    <property type="entry name" value="Hexapep_2"/>
    <property type="match status" value="1"/>
</dbReference>
<dbReference type="Pfam" id="PF14789">
    <property type="entry name" value="THDPS_M"/>
    <property type="match status" value="1"/>
</dbReference>
<dbReference type="Pfam" id="PF14790">
    <property type="entry name" value="THDPS_N"/>
    <property type="match status" value="1"/>
</dbReference>
<dbReference type="SUPFAM" id="SSF51161">
    <property type="entry name" value="Trimeric LpxA-like enzymes"/>
    <property type="match status" value="1"/>
</dbReference>
<keyword id="KW-0002">3D-structure</keyword>
<keyword id="KW-0012">Acyltransferase</keyword>
<keyword id="KW-0028">Amino-acid biosynthesis</keyword>
<keyword id="KW-0963">Cytoplasm</keyword>
<keyword id="KW-0220">Diaminopimelate biosynthesis</keyword>
<keyword id="KW-0457">Lysine biosynthesis</keyword>
<keyword id="KW-1185">Reference proteome</keyword>
<keyword id="KW-0808">Transferase</keyword>
<reference key="1">
    <citation type="journal article" date="2000" name="Nature">
        <title>The genome sequence of the food-borne pathogen Campylobacter jejuni reveals hypervariable sequences.</title>
        <authorList>
            <person name="Parkhill J."/>
            <person name="Wren B.W."/>
            <person name="Mungall K.L."/>
            <person name="Ketley J.M."/>
            <person name="Churcher C.M."/>
            <person name="Basham D."/>
            <person name="Chillingworth T."/>
            <person name="Davies R.M."/>
            <person name="Feltwell T."/>
            <person name="Holroyd S."/>
            <person name="Jagels K."/>
            <person name="Karlyshev A.V."/>
            <person name="Moule S."/>
            <person name="Pallen M.J."/>
            <person name="Penn C.W."/>
            <person name="Quail M.A."/>
            <person name="Rajandream M.A."/>
            <person name="Rutherford K.M."/>
            <person name="van Vliet A.H.M."/>
            <person name="Whitehead S."/>
            <person name="Barrell B.G."/>
        </authorList>
    </citation>
    <scope>NUCLEOTIDE SEQUENCE [LARGE SCALE GENOMIC DNA]</scope>
    <source>
        <strain>ATCC 700819 / NCTC 11168</strain>
    </source>
</reference>
<reference key="2">
    <citation type="submission" date="2011-03" db="PDB data bank">
        <title>Crystal structure of putative 2,3,4,5-tetrahydropyridine-2-carboxylate N-succinyltransferase (NP_282733.1) from Campylobacter jejuni at 1.90 A resolution.</title>
        <authorList>
            <consortium name="Joint Center for Structural Genomics (JCSG)"/>
        </authorList>
    </citation>
    <scope>X-RAY CRYSTALLOGRAPHY (1.90 ANGSTROMS)</scope>
</reference>